<accession>B7IF03</accession>
<keyword id="KW-0963">Cytoplasm</keyword>
<keyword id="KW-0342">GTP-binding</keyword>
<keyword id="KW-0396">Initiation factor</keyword>
<keyword id="KW-0547">Nucleotide-binding</keyword>
<keyword id="KW-0648">Protein biosynthesis</keyword>
<keyword id="KW-1185">Reference proteome</keyword>
<name>IF2_THEAB</name>
<dbReference type="EMBL" id="CP001185">
    <property type="protein sequence ID" value="ACJ74667.1"/>
    <property type="molecule type" value="Genomic_DNA"/>
</dbReference>
<dbReference type="RefSeq" id="WP_012579381.1">
    <property type="nucleotide sequence ID" value="NC_011653.1"/>
</dbReference>
<dbReference type="SMR" id="B7IF03"/>
<dbReference type="STRING" id="484019.THA_160"/>
<dbReference type="KEGG" id="taf:THA_160"/>
<dbReference type="eggNOG" id="COG0532">
    <property type="taxonomic scope" value="Bacteria"/>
</dbReference>
<dbReference type="HOGENOM" id="CLU_006301_5_1_0"/>
<dbReference type="OrthoDB" id="9811804at2"/>
<dbReference type="Proteomes" id="UP000002453">
    <property type="component" value="Chromosome"/>
</dbReference>
<dbReference type="GO" id="GO:0005829">
    <property type="term" value="C:cytosol"/>
    <property type="evidence" value="ECO:0007669"/>
    <property type="project" value="TreeGrafter"/>
</dbReference>
<dbReference type="GO" id="GO:0005525">
    <property type="term" value="F:GTP binding"/>
    <property type="evidence" value="ECO:0007669"/>
    <property type="project" value="UniProtKB-KW"/>
</dbReference>
<dbReference type="GO" id="GO:0003924">
    <property type="term" value="F:GTPase activity"/>
    <property type="evidence" value="ECO:0007669"/>
    <property type="project" value="UniProtKB-UniRule"/>
</dbReference>
<dbReference type="GO" id="GO:0003743">
    <property type="term" value="F:translation initiation factor activity"/>
    <property type="evidence" value="ECO:0007669"/>
    <property type="project" value="UniProtKB-UniRule"/>
</dbReference>
<dbReference type="CDD" id="cd01887">
    <property type="entry name" value="IF2_eIF5B"/>
    <property type="match status" value="1"/>
</dbReference>
<dbReference type="CDD" id="cd03702">
    <property type="entry name" value="IF2_mtIF2_II"/>
    <property type="match status" value="1"/>
</dbReference>
<dbReference type="CDD" id="cd03692">
    <property type="entry name" value="mtIF2_IVc"/>
    <property type="match status" value="1"/>
</dbReference>
<dbReference type="FunFam" id="2.40.30.10:FF:000008">
    <property type="entry name" value="Translation initiation factor IF-2"/>
    <property type="match status" value="1"/>
</dbReference>
<dbReference type="FunFam" id="2.40.30.10:FF:000054">
    <property type="entry name" value="Translation initiation factor IF-2"/>
    <property type="match status" value="1"/>
</dbReference>
<dbReference type="FunFam" id="3.40.50.10050:FF:000001">
    <property type="entry name" value="Translation initiation factor IF-2"/>
    <property type="match status" value="1"/>
</dbReference>
<dbReference type="FunFam" id="3.40.50.300:FF:000019">
    <property type="entry name" value="Translation initiation factor IF-2"/>
    <property type="match status" value="1"/>
</dbReference>
<dbReference type="Gene3D" id="1.10.10.2480">
    <property type="match status" value="1"/>
</dbReference>
<dbReference type="Gene3D" id="3.40.50.300">
    <property type="entry name" value="P-loop containing nucleotide triphosphate hydrolases"/>
    <property type="match status" value="1"/>
</dbReference>
<dbReference type="Gene3D" id="2.40.30.10">
    <property type="entry name" value="Translation factors"/>
    <property type="match status" value="2"/>
</dbReference>
<dbReference type="Gene3D" id="3.40.50.10050">
    <property type="entry name" value="Translation initiation factor IF- 2, domain 3"/>
    <property type="match status" value="1"/>
</dbReference>
<dbReference type="HAMAP" id="MF_00100_B">
    <property type="entry name" value="IF_2_B"/>
    <property type="match status" value="1"/>
</dbReference>
<dbReference type="InterPro" id="IPR053905">
    <property type="entry name" value="EF-G-like_DII"/>
</dbReference>
<dbReference type="InterPro" id="IPR044145">
    <property type="entry name" value="IF2_II"/>
</dbReference>
<dbReference type="InterPro" id="IPR006847">
    <property type="entry name" value="IF2_N"/>
</dbReference>
<dbReference type="InterPro" id="IPR027417">
    <property type="entry name" value="P-loop_NTPase"/>
</dbReference>
<dbReference type="InterPro" id="IPR005225">
    <property type="entry name" value="Small_GTP-bd"/>
</dbReference>
<dbReference type="InterPro" id="IPR000795">
    <property type="entry name" value="T_Tr_GTP-bd_dom"/>
</dbReference>
<dbReference type="InterPro" id="IPR000178">
    <property type="entry name" value="TF_IF2_bacterial-like"/>
</dbReference>
<dbReference type="InterPro" id="IPR015760">
    <property type="entry name" value="TIF_IF2"/>
</dbReference>
<dbReference type="InterPro" id="IPR023115">
    <property type="entry name" value="TIF_IF2_dom3"/>
</dbReference>
<dbReference type="InterPro" id="IPR036925">
    <property type="entry name" value="TIF_IF2_dom3_sf"/>
</dbReference>
<dbReference type="InterPro" id="IPR009000">
    <property type="entry name" value="Transl_B-barrel_sf"/>
</dbReference>
<dbReference type="NCBIfam" id="TIGR00487">
    <property type="entry name" value="IF-2"/>
    <property type="match status" value="1"/>
</dbReference>
<dbReference type="NCBIfam" id="TIGR00231">
    <property type="entry name" value="small_GTP"/>
    <property type="match status" value="1"/>
</dbReference>
<dbReference type="PANTHER" id="PTHR43381:SF5">
    <property type="entry name" value="TR-TYPE G DOMAIN-CONTAINING PROTEIN"/>
    <property type="match status" value="1"/>
</dbReference>
<dbReference type="PANTHER" id="PTHR43381">
    <property type="entry name" value="TRANSLATION INITIATION FACTOR IF-2-RELATED"/>
    <property type="match status" value="1"/>
</dbReference>
<dbReference type="Pfam" id="PF22042">
    <property type="entry name" value="EF-G_D2"/>
    <property type="match status" value="1"/>
</dbReference>
<dbReference type="Pfam" id="PF00009">
    <property type="entry name" value="GTP_EFTU"/>
    <property type="match status" value="1"/>
</dbReference>
<dbReference type="Pfam" id="PF11987">
    <property type="entry name" value="IF-2"/>
    <property type="match status" value="1"/>
</dbReference>
<dbReference type="Pfam" id="PF04760">
    <property type="entry name" value="IF2_N"/>
    <property type="match status" value="2"/>
</dbReference>
<dbReference type="SUPFAM" id="SSF52156">
    <property type="entry name" value="Initiation factor IF2/eIF5b, domain 3"/>
    <property type="match status" value="1"/>
</dbReference>
<dbReference type="SUPFAM" id="SSF52540">
    <property type="entry name" value="P-loop containing nucleoside triphosphate hydrolases"/>
    <property type="match status" value="1"/>
</dbReference>
<dbReference type="SUPFAM" id="SSF50447">
    <property type="entry name" value="Translation proteins"/>
    <property type="match status" value="2"/>
</dbReference>
<dbReference type="PROSITE" id="PS51722">
    <property type="entry name" value="G_TR_2"/>
    <property type="match status" value="1"/>
</dbReference>
<comment type="function">
    <text evidence="2">One of the essential components for the initiation of protein synthesis. Protects formylmethionyl-tRNA from spontaneous hydrolysis and promotes its binding to the 30S ribosomal subunits. Also involved in the hydrolysis of GTP during the formation of the 70S ribosomal complex.</text>
</comment>
<comment type="subcellular location">
    <subcellularLocation>
        <location evidence="2">Cytoplasm</location>
    </subcellularLocation>
</comment>
<comment type="similarity">
    <text evidence="2">Belongs to the TRAFAC class translation factor GTPase superfamily. Classic translation factor GTPase family. IF-2 subfamily.</text>
</comment>
<organism>
    <name type="scientific">Thermosipho africanus (strain TCF52B)</name>
    <dbReference type="NCBI Taxonomy" id="484019"/>
    <lineage>
        <taxon>Bacteria</taxon>
        <taxon>Thermotogati</taxon>
        <taxon>Thermotogota</taxon>
        <taxon>Thermotogae</taxon>
        <taxon>Thermotogales</taxon>
        <taxon>Fervidobacteriaceae</taxon>
        <taxon>Thermosipho</taxon>
    </lineage>
</organism>
<proteinExistence type="inferred from homology"/>
<protein>
    <recommendedName>
        <fullName evidence="2">Translation initiation factor IF-2</fullName>
    </recommendedName>
</protein>
<sequence>MARLRVYELARQLEMDTRELMKELHELGIEIKSHMSYIDEETVNLLLEMYGTQEEEEELIEEYEEYEEIDEEVNGKHFKNKEGSLEKLQTNKKKNSVKITEEDLKLDKFAEKIGIPQNKIIQDFFMKGEILKPGQSLNLQLAKKIAKMYDVRISFENEEKEEVIENPLIEIEKYFEEKYKNPENLKERPPVVTVMGHVDHGKTTLLDYIRNTRVAEREEGGITQSIGAYQVEVNGKKITFIDTPGHEIFTEMRARGAQATDIVVLVVAADDGVMPQTIEAYNHAKSANVPIIVAINKIDKPNANVEKTKQELVNKLNLIPEEWGGDTIVVPISAKKGQNVDTLLEMILLVAEMQEIKGIPDGPVRAVTIESKLDKGFGPVANVIVKDGILKIGDYIISGKVMGKVKALVNDQGKRVKEAGPSTPVMIVGFEELPDSHGIVYSVDSLDKAREISEKIREIEQKELRRKRHMKLEEILKMMEQSERKELRLVLKADTQGSLMALSGAINKLRSEEISINIIHSGVGSITVSDVMLATASDAIILGFRVKADSQARKMAEAEGIQIKTYTIVYKLIEELQAALEGMLEPEEIEEITGRGEIKKVFKIKKVGSIAGVQMIEGYVEKDGLVKVYRSGKLVYEGKIESLKHYQQDVKRVDAPQECGIKLENFDDIKEGDELEFSVLKKVARKLTFEEDKGEK</sequence>
<evidence type="ECO:0000250" key="1"/>
<evidence type="ECO:0000255" key="2">
    <source>
        <dbReference type="HAMAP-Rule" id="MF_00100"/>
    </source>
</evidence>
<feature type="chain" id="PRO_1000117338" description="Translation initiation factor IF-2">
    <location>
        <begin position="1"/>
        <end position="696"/>
    </location>
</feature>
<feature type="domain" description="tr-type G">
    <location>
        <begin position="187"/>
        <end position="361"/>
    </location>
</feature>
<feature type="region of interest" description="G1" evidence="1">
    <location>
        <begin position="196"/>
        <end position="203"/>
    </location>
</feature>
<feature type="region of interest" description="G2" evidence="1">
    <location>
        <begin position="221"/>
        <end position="225"/>
    </location>
</feature>
<feature type="region of interest" description="G3" evidence="1">
    <location>
        <begin position="242"/>
        <end position="245"/>
    </location>
</feature>
<feature type="region of interest" description="G4" evidence="1">
    <location>
        <begin position="296"/>
        <end position="299"/>
    </location>
</feature>
<feature type="region of interest" description="G5" evidence="1">
    <location>
        <begin position="333"/>
        <end position="335"/>
    </location>
</feature>
<feature type="binding site" evidence="2">
    <location>
        <begin position="196"/>
        <end position="203"/>
    </location>
    <ligand>
        <name>GTP</name>
        <dbReference type="ChEBI" id="CHEBI:37565"/>
    </ligand>
</feature>
<feature type="binding site" evidence="2">
    <location>
        <begin position="242"/>
        <end position="246"/>
    </location>
    <ligand>
        <name>GTP</name>
        <dbReference type="ChEBI" id="CHEBI:37565"/>
    </ligand>
</feature>
<feature type="binding site" evidence="2">
    <location>
        <begin position="296"/>
        <end position="299"/>
    </location>
    <ligand>
        <name>GTP</name>
        <dbReference type="ChEBI" id="CHEBI:37565"/>
    </ligand>
</feature>
<reference key="1">
    <citation type="journal article" date="2009" name="J. Bacteriol.">
        <title>The genome of Thermosipho africanus TCF52B: lateral genetic connections to the Firmicutes and Archaea.</title>
        <authorList>
            <person name="Nesboe C.L."/>
            <person name="Bapteste E."/>
            <person name="Curtis B."/>
            <person name="Dahle H."/>
            <person name="Lopez P."/>
            <person name="Macleod D."/>
            <person name="Dlutek M."/>
            <person name="Bowman S."/>
            <person name="Zhaxybayeva O."/>
            <person name="Birkeland N.-K."/>
            <person name="Doolittle W.F."/>
        </authorList>
    </citation>
    <scope>NUCLEOTIDE SEQUENCE [LARGE SCALE GENOMIC DNA]</scope>
    <source>
        <strain>TCF52B</strain>
    </source>
</reference>
<gene>
    <name evidence="2" type="primary">infB</name>
    <name type="ordered locus">THA_160</name>
</gene>